<proteinExistence type="evidence at protein level"/>
<name>LCOR_HUMAN</name>
<gene>
    <name evidence="10" type="primary">LCOR</name>
    <name evidence="10" type="synonym">C10orf12</name>
    <name evidence="9" type="synonym">KIAA1795</name>
    <name type="synonym">MLR2</name>
</gene>
<protein>
    <recommendedName>
        <fullName>Ligand-dependent corepressor</fullName>
        <shortName>LCoR</shortName>
    </recommendedName>
    <alternativeName>
        <fullName>Mblk1-related protein 2</fullName>
    </alternativeName>
</protein>
<evidence type="ECO:0000250" key="1"/>
<evidence type="ECO:0000255" key="2"/>
<evidence type="ECO:0000255" key="3">
    <source>
        <dbReference type="PROSITE-ProRule" id="PRU00320"/>
    </source>
</evidence>
<evidence type="ECO:0000256" key="4">
    <source>
        <dbReference type="SAM" id="MobiDB-lite"/>
    </source>
</evidence>
<evidence type="ECO:0000269" key="5">
    <source>
    </source>
</evidence>
<evidence type="ECO:0000269" key="6">
    <source>
    </source>
</evidence>
<evidence type="ECO:0000303" key="7">
    <source>
    </source>
</evidence>
<evidence type="ECO:0000305" key="8"/>
<evidence type="ECO:0000312" key="9">
    <source>
        <dbReference type="EMBL" id="BAB47424.1"/>
    </source>
</evidence>
<evidence type="ECO:0000312" key="10">
    <source>
        <dbReference type="HGNC" id="HGNC:29503"/>
    </source>
</evidence>
<evidence type="ECO:0007744" key="11">
    <source>
    </source>
</evidence>
<evidence type="ECO:0007744" key="12">
    <source>
    </source>
</evidence>
<evidence type="ECO:0007744" key="13">
    <source>
    </source>
</evidence>
<evidence type="ECO:0007744" key="14">
    <source>
    </source>
</evidence>
<evidence type="ECO:0007744" key="15">
    <source>
    </source>
</evidence>
<evidence type="ECO:0007744" key="16">
    <source>
    </source>
</evidence>
<evidence type="ECO:0007744" key="17">
    <source>
    </source>
</evidence>
<evidence type="ECO:0007829" key="18">
    <source>
        <dbReference type="PDB" id="2COB"/>
    </source>
</evidence>
<sequence>MQRMIQQFAAEYTSKNSSTQDPSQPNSTKNQSLPKASPVTTSPTAATTQNPVLSKLLMADQDSPLDLTVRKSQSEPSEQDGVLDLSTKKSPCAGSTSLSHSPGCSSTQGNGRPGRPSQYRPDGLRSGDGVPPRSLQDGTREGFGHSTSLKVPLARSLQISEELLSRNQLSTAASLGPSGLQNHGQHLILSREASWAKPHYEFNLSRMKFRGNGALSNISDLPFLAENSAFPKMALQAKQDGKKDVSHSSPVDLKIPQVRGMDLSWESRTGDQYSYSSLVMGSQTESALSKKLRAILPKQSRKSMLDAGPDSWGSDAEQSTSGQPYPTSDQEGDPGSKQPRKKRGRYRQYNSEILEEAISVVMSGKMSVSKAQSIYGIPHSTLEYKVKERLGTLKNPPKKKMKLMRSEGPDVSVKIELDPQGEAAQSANESKNE</sequence>
<feature type="chain" id="PRO_0000236807" description="Ligand-dependent corepressor">
    <location>
        <begin position="1"/>
        <end position="433"/>
    </location>
</feature>
<feature type="domain" description="HTH psq-type" evidence="3">
    <location>
        <begin position="340"/>
        <end position="392"/>
    </location>
</feature>
<feature type="DNA-binding region" description="H-T-H motif" evidence="3">
    <location>
        <begin position="368"/>
        <end position="388"/>
    </location>
</feature>
<feature type="region of interest" description="Disordered" evidence="4">
    <location>
        <begin position="1"/>
        <end position="51"/>
    </location>
</feature>
<feature type="region of interest" description="Disordered" evidence="4">
    <location>
        <begin position="64"/>
        <end position="147"/>
    </location>
</feature>
<feature type="region of interest" description="Disordered" evidence="4">
    <location>
        <begin position="299"/>
        <end position="348"/>
    </location>
</feature>
<feature type="region of interest" description="Disordered" evidence="4">
    <location>
        <begin position="393"/>
        <end position="412"/>
    </location>
</feature>
<feature type="short sequence motif" description="Interaction with nuclear receptors">
    <location>
        <begin position="53"/>
        <end position="57"/>
    </location>
</feature>
<feature type="short sequence motif" description="Nuclear localization signal" evidence="2">
    <location>
        <begin position="339"/>
        <end position="345"/>
    </location>
</feature>
<feature type="compositionally biased region" description="Polar residues" evidence="4">
    <location>
        <begin position="13"/>
        <end position="34"/>
    </location>
</feature>
<feature type="compositionally biased region" description="Low complexity" evidence="4">
    <location>
        <begin position="36"/>
        <end position="48"/>
    </location>
</feature>
<feature type="compositionally biased region" description="Polar residues" evidence="4">
    <location>
        <begin position="93"/>
        <end position="110"/>
    </location>
</feature>
<feature type="compositionally biased region" description="Polar residues" evidence="4">
    <location>
        <begin position="316"/>
        <end position="329"/>
    </location>
</feature>
<feature type="modified residue" description="Phosphoserine" evidence="15">
    <location>
        <position position="42"/>
    </location>
</feature>
<feature type="modified residue" description="Phosphoserine" evidence="13">
    <location>
        <position position="63"/>
    </location>
</feature>
<feature type="modified residue" description="Phosphoserine" evidence="13 15">
    <location>
        <position position="249"/>
    </location>
</feature>
<feature type="cross-link" description="Glycyl lysine isopeptide (Lys-Gly) (interchain with G-Cter in SUMO2)" evidence="17">
    <location>
        <position position="254"/>
    </location>
</feature>
<feature type="cross-link" description="Glycyl lysine isopeptide (Lys-Gly) (interchain with G-Cter in SUMO2)" evidence="17">
    <location>
        <position position="414"/>
    </location>
</feature>
<feature type="splice variant" id="VSP_058760" description="In isoform 3.">
    <original>RPGRPSQYRPDGLRSGDGVPPRSLQDGTREGFGHSTSLKVPLARSLQISEELLSRNQLSTAASLGPSGLQNHGQHLILSREASWAKPHYEFNLSRMKFRGNGALSNISDLPFLAENSAFPKMALQAKQDGKKDVSHSSPVDLKIPQVRGMDLSWESRTGDQYSYSSLVMGSQTESALSKKLRAILPKQSRKSMLDAGPDSWGSDAEQSTSGQPYPTSDQEGDPGSKQPRKKRGRYRQYNSEILEEAISVVMSGKMSVSKAQSIYGIPHSTLEYKVKERLGTLKNPPKKKMKLMRSEGPDVSVKIELDPQGEAAQSANESKNE</original>
    <variation>ENSTEAKAVDSNNQSKSPLEKFMVKLCTHHQKQFIRVLNDLYTESQPGTEDLQPSDSGAMDVSTCNAGCAQLSTKHKEKDALCLDMKSSASVDLFVDSSDSHSPLHLTEQTPKKPPPEINPVDGRENALTVVQKDSSELPTTKSNSINSSSVDSFTPGYLTASNCSSVNFHHIPKILEGQTTGQEQDTNVNICEDGKDHMQSSALVESLITVKMAAENSEEGNTCIIPQRNLFKALSEEAWNSGFMGNSSRTADKENTLQCPKTPLRQDLEANEQDARPKQENHLHSLGRNKVGYHLHPSDKGQFDHSKDGWLGPGPMPAVHKAANGHSRTKMISTSIKTARKSKRASGLRINDYDNQCDVVYISQPITECHFENQKSILSSRKTARKSTRGYFFNGDCCELPTVRTLARNLHSQEKASCSALASEAVFTPKQTLTIPAPRHTVDVQLPREDNPEEPSKEITSHEEGGGDVSPRKEPQEPEVCPTKIKPNLSSSPRSEETTASSLVWPLPAHLPEEDLPEGGSTVSAPTASGMSSPEHNQPPVALLDTEEMSVPQDCHLLPSTESFSGGVSEDVISRPHSPPEIVSREESPQCSENQSSPMGLEPPMSLGKAEDNQSISAEVESGDTQELNVDPLLKESSTFTDENPSETEESEAAGGIGKLEGEDGDVKCLSEKDTYDTSIDSLEENLDKKKKGKKFPEASDRCLRSQLSDSSSADRCLRNQSSDSSSACLEIKVPKNPSAKRSKKEGHPGGTTPKGLLPDSFHTETLEDTEKPSVNERPSEKDAEQEGEGGGIITRQTLKNMLDKEVKELRGEIFPSRDPITTAGQPLPGERLEIYVQSKMDEKNAHIPSESIACKRDPEQAKEEPGHIPTQHVEEAVNEVDNENTQQKDDESDAPCSSLGLSSSGSGDAARAPKSVPRPKRLTSSTYNLRHAHSLGSLDASKVTSEKEAAQVNPIMPKENGASESGDPLDEDDVDTVVDEQPKFMEWCAEEENQELIANFNAQYMKVQKGWIQLEKEGQPTPRARNKSDKLKEIWKSKKRSRKCRSSLESQKCSPVQMLFMTNFKLSNVCKWFLETTETRSLVIVKKLNTRLPGDVPPVKHPLQKYAPSSLYPSSLQAERLKKHLKKFPGATPAKNNWKMQKLWAKFRENPDQVEPEDGSDVSPGPNSEDSIEEVKEDRNSHPPANLPTPASTRILRKYSNIRGKLRAQQRLIKNEKMECPDALAVESKPSRKSVCINPLMSPKLALQVDADGFPVKPKSTEGMKGRKGKQVSEILPKAEVQSKRKRTEGSSPPDSKNKGPTVKASKEKHADGATKTPAAKRPAARDRSSQPPKKTSLKENKVKIPKKSAGKSCPPSRKEKENTNKRPSQSIASETLTKPAKQKGAGESSSRPQKATNRKQSSGKTRARPSTKTPESSAAQRKRKLKAKLDCSHSKRRRLDAK</variation>
    <location>
        <begin position="112"/>
        <end position="433"/>
    </location>
</feature>
<feature type="splice variant" id="VSP_018585" description="In isoform 2." evidence="7">
    <original>RS</original>
    <variation>SG</variation>
    <location>
        <begin position="405"/>
        <end position="406"/>
    </location>
</feature>
<feature type="splice variant" id="VSP_018586" description="In isoform 2." evidence="7">
    <location>
        <begin position="407"/>
        <end position="433"/>
    </location>
</feature>
<feature type="mutagenesis site" description="Loss of estradiol-dependent interaction with ESR1 and ESR2." evidence="5">
    <original>LL</original>
    <variation>AA</variation>
    <location>
        <begin position="56"/>
        <end position="57"/>
    </location>
</feature>
<feature type="sequence conflict" description="In Ref. 2; CAD91159." evidence="8" ref="2">
    <original>Q</original>
    <variation>P</variation>
    <location>
        <position position="6"/>
    </location>
</feature>
<feature type="sequence conflict" description="In Ref. 2; CAD38921." evidence="8" ref="2">
    <original>S</original>
    <variation>P</variation>
    <location>
        <position position="321"/>
    </location>
</feature>
<feature type="helix" evidence="18">
    <location>
        <begin position="351"/>
        <end position="362"/>
    </location>
</feature>
<feature type="helix" evidence="18">
    <location>
        <begin position="368"/>
        <end position="375"/>
    </location>
</feature>
<feature type="helix" evidence="18">
    <location>
        <begin position="379"/>
        <end position="389"/>
    </location>
</feature>
<feature type="turn" evidence="18">
    <location>
        <begin position="390"/>
        <end position="393"/>
    </location>
</feature>
<feature type="modified residue" description="Phosphoserine" evidence="11 14 15">
    <location sequence="Q96JN0-3">
        <position position="583"/>
    </location>
</feature>
<feature type="modified residue" description="Phosphoserine" evidence="15">
    <location sequence="Q96JN0-3">
        <position position="605"/>
    </location>
</feature>
<feature type="modified residue" description="Phosphoserine" evidence="13">
    <location sequence="Q96JN0-3">
        <position position="792"/>
    </location>
</feature>
<feature type="modified residue" description="Phosphoserine" evidence="13">
    <location sequence="Q96JN0-3">
        <position position="1048"/>
    </location>
</feature>
<feature type="modified residue" description="Phosphoserine" evidence="12">
    <location sequence="Q96JN0-3">
        <position position="1077"/>
    </location>
</feature>
<feature type="modified residue" description="N6,N6-dimethyllysine" evidence="16">
    <location sequence="Q96JN0-3">
        <position position="1214"/>
    </location>
</feature>
<feature type="modified residue" description="N6,N6-dimethyllysine" evidence="16">
    <location sequence="Q96JN0-3">
        <position position="1219"/>
    </location>
</feature>
<feature type="modified residue" description="Phosphoserine" evidence="13">
    <location sequence="Q96JN0-3">
        <position position="1274"/>
    </location>
</feature>
<feature type="cross-link" description="Glycyl lysine isopeptide (Lys-Gly) (interchain with G-Cter in SUMO2)" evidence="17">
    <location sequence="Q96JN0-3">
        <position position="345"/>
    </location>
</feature>
<feature type="cross-link" description="Glycyl lysine isopeptide (Lys-Gly) (interchain with G-Cter in SUMO2)" evidence="17">
    <location sequence="Q96JN0-3">
        <position position="391"/>
    </location>
</feature>
<feature type="cross-link" description="Glycyl lysine isopeptide (Lys-Gly) (interchain with G-Cter in SUMO2)" evidence="17">
    <location sequence="Q96JN0-3">
        <position position="543"/>
    </location>
</feature>
<feature type="cross-link" description="Glycyl lysine isopeptide (Lys-Gly) (interchain with G-Cter in SUMO2)" evidence="17">
    <location sequence="Q96JN0-3">
        <position position="976"/>
    </location>
</feature>
<feature type="sequence conflict" description="In Ref. 6; BAB14396." evidence="8" ref="6">
    <original>E</original>
    <variation>G</variation>
    <location sequence="Q96JN0-3">
        <position position="922"/>
    </location>
</feature>
<feature type="sequence conflict" description="In Ref. 6; BAB14396." evidence="8" ref="6">
    <original>D</original>
    <variation>G</variation>
    <location sequence="Q96JN0-3">
        <position position="1209"/>
    </location>
</feature>
<organism>
    <name type="scientific">Homo sapiens</name>
    <name type="common">Human</name>
    <dbReference type="NCBI Taxonomy" id="9606"/>
    <lineage>
        <taxon>Eukaryota</taxon>
        <taxon>Metazoa</taxon>
        <taxon>Chordata</taxon>
        <taxon>Craniata</taxon>
        <taxon>Vertebrata</taxon>
        <taxon>Euteleostomi</taxon>
        <taxon>Mammalia</taxon>
        <taxon>Eutheria</taxon>
        <taxon>Euarchontoglires</taxon>
        <taxon>Primates</taxon>
        <taxon>Haplorrhini</taxon>
        <taxon>Catarrhini</taxon>
        <taxon>Hominidae</taxon>
        <taxon>Homo</taxon>
    </lineage>
</organism>
<reference key="1">
    <citation type="journal article" date="2001" name="DNA Res.">
        <title>Prediction of the coding sequences of unidentified human genes. XX. The complete sequences of 100 new cDNA clones from brain which code for large proteins in vitro.</title>
        <authorList>
            <person name="Nagase T."/>
            <person name="Nakayama M."/>
            <person name="Nakajima D."/>
            <person name="Kikuno R."/>
            <person name="Ohara O."/>
        </authorList>
    </citation>
    <scope>NUCLEOTIDE SEQUENCE [LARGE SCALE MRNA] (ISOFORM 1)</scope>
    <source>
        <tissue>Brain</tissue>
    </source>
</reference>
<reference key="2">
    <citation type="journal article" date="2007" name="BMC Genomics">
        <title>The full-ORF clone resource of the German cDNA consortium.</title>
        <authorList>
            <person name="Bechtel S."/>
            <person name="Rosenfelder H."/>
            <person name="Duda A."/>
            <person name="Schmidt C.P."/>
            <person name="Ernst U."/>
            <person name="Wellenreuther R."/>
            <person name="Mehrle A."/>
            <person name="Schuster C."/>
            <person name="Bahr A."/>
            <person name="Bloecker H."/>
            <person name="Heubner D."/>
            <person name="Hoerlein A."/>
            <person name="Michel G."/>
            <person name="Wedler H."/>
            <person name="Koehrer K."/>
            <person name="Ottenwaelder B."/>
            <person name="Poustka A."/>
            <person name="Wiemann S."/>
            <person name="Schupp I."/>
        </authorList>
    </citation>
    <scope>NUCLEOTIDE SEQUENCE [LARGE SCALE MRNA] (ISOFORM 1)</scope>
    <scope>PARTIAL NUCLEOTIDE SEQUENCE [LARGE SCALE MRNA] (ISOFORM 3)</scope>
    <source>
        <tissue>Bone marrow</tissue>
        <tissue>Brain</tissue>
        <tissue>Skeletal muscle</tissue>
    </source>
</reference>
<reference key="3">
    <citation type="journal article" date="2004" name="Nature">
        <title>The DNA sequence and comparative analysis of human chromosome 10.</title>
        <authorList>
            <person name="Deloukas P."/>
            <person name="Earthrowl M.E."/>
            <person name="Grafham D.V."/>
            <person name="Rubenfield M."/>
            <person name="French L."/>
            <person name="Steward C.A."/>
            <person name="Sims S.K."/>
            <person name="Jones M.C."/>
            <person name="Searle S."/>
            <person name="Scott C."/>
            <person name="Howe K."/>
            <person name="Hunt S.E."/>
            <person name="Andrews T.D."/>
            <person name="Gilbert J.G.R."/>
            <person name="Swarbreck D."/>
            <person name="Ashurst J.L."/>
            <person name="Taylor A."/>
            <person name="Battles J."/>
            <person name="Bird C.P."/>
            <person name="Ainscough R."/>
            <person name="Almeida J.P."/>
            <person name="Ashwell R.I.S."/>
            <person name="Ambrose K.D."/>
            <person name="Babbage A.K."/>
            <person name="Bagguley C.L."/>
            <person name="Bailey J."/>
            <person name="Banerjee R."/>
            <person name="Bates K."/>
            <person name="Beasley H."/>
            <person name="Bray-Allen S."/>
            <person name="Brown A.J."/>
            <person name="Brown J.Y."/>
            <person name="Burford D.C."/>
            <person name="Burrill W."/>
            <person name="Burton J."/>
            <person name="Cahill P."/>
            <person name="Camire D."/>
            <person name="Carter N.P."/>
            <person name="Chapman J.C."/>
            <person name="Clark S.Y."/>
            <person name="Clarke G."/>
            <person name="Clee C.M."/>
            <person name="Clegg S."/>
            <person name="Corby N."/>
            <person name="Coulson A."/>
            <person name="Dhami P."/>
            <person name="Dutta I."/>
            <person name="Dunn M."/>
            <person name="Faulkner L."/>
            <person name="Frankish A."/>
            <person name="Frankland J.A."/>
            <person name="Garner P."/>
            <person name="Garnett J."/>
            <person name="Gribble S."/>
            <person name="Griffiths C."/>
            <person name="Grocock R."/>
            <person name="Gustafson E."/>
            <person name="Hammond S."/>
            <person name="Harley J.L."/>
            <person name="Hart E."/>
            <person name="Heath P.D."/>
            <person name="Ho T.P."/>
            <person name="Hopkins B."/>
            <person name="Horne J."/>
            <person name="Howden P.J."/>
            <person name="Huckle E."/>
            <person name="Hynds C."/>
            <person name="Johnson C."/>
            <person name="Johnson D."/>
            <person name="Kana A."/>
            <person name="Kay M."/>
            <person name="Kimberley A.M."/>
            <person name="Kershaw J.K."/>
            <person name="Kokkinaki M."/>
            <person name="Laird G.K."/>
            <person name="Lawlor S."/>
            <person name="Lee H.M."/>
            <person name="Leongamornlert D.A."/>
            <person name="Laird G."/>
            <person name="Lloyd C."/>
            <person name="Lloyd D.M."/>
            <person name="Loveland J."/>
            <person name="Lovell J."/>
            <person name="McLaren S."/>
            <person name="McLay K.E."/>
            <person name="McMurray A."/>
            <person name="Mashreghi-Mohammadi M."/>
            <person name="Matthews L."/>
            <person name="Milne S."/>
            <person name="Nickerson T."/>
            <person name="Nguyen M."/>
            <person name="Overton-Larty E."/>
            <person name="Palmer S.A."/>
            <person name="Pearce A.V."/>
            <person name="Peck A.I."/>
            <person name="Pelan S."/>
            <person name="Phillimore B."/>
            <person name="Porter K."/>
            <person name="Rice C.M."/>
            <person name="Rogosin A."/>
            <person name="Ross M.T."/>
            <person name="Sarafidou T."/>
            <person name="Sehra H.K."/>
            <person name="Shownkeen R."/>
            <person name="Skuce C.D."/>
            <person name="Smith M."/>
            <person name="Standring L."/>
            <person name="Sycamore N."/>
            <person name="Tester J."/>
            <person name="Thorpe A."/>
            <person name="Torcasso W."/>
            <person name="Tracey A."/>
            <person name="Tromans A."/>
            <person name="Tsolas J."/>
            <person name="Wall M."/>
            <person name="Walsh J."/>
            <person name="Wang H."/>
            <person name="Weinstock K."/>
            <person name="West A.P."/>
            <person name="Willey D.L."/>
            <person name="Whitehead S.L."/>
            <person name="Wilming L."/>
            <person name="Wray P.W."/>
            <person name="Young L."/>
            <person name="Chen Y."/>
            <person name="Lovering R.C."/>
            <person name="Moschonas N.K."/>
            <person name="Siebert R."/>
            <person name="Fechtel K."/>
            <person name="Bentley D."/>
            <person name="Durbin R.M."/>
            <person name="Hubbard T."/>
            <person name="Doucette-Stamm L."/>
            <person name="Beck S."/>
            <person name="Smith D.R."/>
            <person name="Rogers J."/>
        </authorList>
    </citation>
    <scope>NUCLEOTIDE SEQUENCE [LARGE SCALE GENOMIC DNA]</scope>
</reference>
<reference key="4">
    <citation type="submission" date="2005-09" db="EMBL/GenBank/DDBJ databases">
        <authorList>
            <person name="Mural R.J."/>
            <person name="Istrail S."/>
            <person name="Sutton G.G."/>
            <person name="Florea L."/>
            <person name="Halpern A.L."/>
            <person name="Mobarry C.M."/>
            <person name="Lippert R."/>
            <person name="Walenz B."/>
            <person name="Shatkay H."/>
            <person name="Dew I."/>
            <person name="Miller J.R."/>
            <person name="Flanigan M.J."/>
            <person name="Edwards N.J."/>
            <person name="Bolanos R."/>
            <person name="Fasulo D."/>
            <person name="Halldorsson B.V."/>
            <person name="Hannenhalli S."/>
            <person name="Turner R."/>
            <person name="Yooseph S."/>
            <person name="Lu F."/>
            <person name="Nusskern D.R."/>
            <person name="Shue B.C."/>
            <person name="Zheng X.H."/>
            <person name="Zhong F."/>
            <person name="Delcher A.L."/>
            <person name="Huson D.H."/>
            <person name="Kravitz S.A."/>
            <person name="Mouchard L."/>
            <person name="Reinert K."/>
            <person name="Remington K.A."/>
            <person name="Clark A.G."/>
            <person name="Waterman M.S."/>
            <person name="Eichler E.E."/>
            <person name="Adams M.D."/>
            <person name="Hunkapiller M.W."/>
            <person name="Myers E.W."/>
            <person name="Venter J.C."/>
        </authorList>
    </citation>
    <scope>NUCLEOTIDE SEQUENCE [LARGE SCALE GENOMIC DNA]</scope>
</reference>
<reference key="5">
    <citation type="journal article" date="2004" name="Genome Res.">
        <title>The status, quality, and expansion of the NIH full-length cDNA project: the Mammalian Gene Collection (MGC).</title>
        <authorList>
            <consortium name="The MGC Project Team"/>
        </authorList>
    </citation>
    <scope>NUCLEOTIDE SEQUENCE [LARGE SCALE MRNA] (ISOFORM 2)</scope>
    <scope>PARTIAL NUCLEOTIDE SEQUENCE [LARGE SCALE MRNA] (ISOFORM 3)</scope>
    <source>
        <tissue>Lung</tissue>
        <tissue>Pancreas</tissue>
    </source>
</reference>
<reference key="6">
    <citation type="journal article" date="2004" name="Nat. Genet.">
        <title>Complete sequencing and characterization of 21,243 full-length human cDNAs.</title>
        <authorList>
            <person name="Ota T."/>
            <person name="Suzuki Y."/>
            <person name="Nishikawa T."/>
            <person name="Otsuki T."/>
            <person name="Sugiyama T."/>
            <person name="Irie R."/>
            <person name="Wakamatsu A."/>
            <person name="Hayashi K."/>
            <person name="Sato H."/>
            <person name="Nagai K."/>
            <person name="Kimura K."/>
            <person name="Makita H."/>
            <person name="Sekine M."/>
            <person name="Obayashi M."/>
            <person name="Nishi T."/>
            <person name="Shibahara T."/>
            <person name="Tanaka T."/>
            <person name="Ishii S."/>
            <person name="Yamamoto J."/>
            <person name="Saito K."/>
            <person name="Kawai Y."/>
            <person name="Isono Y."/>
            <person name="Nakamura Y."/>
            <person name="Nagahari K."/>
            <person name="Murakami K."/>
            <person name="Yasuda T."/>
            <person name="Iwayanagi T."/>
            <person name="Wagatsuma M."/>
            <person name="Shiratori A."/>
            <person name="Sudo H."/>
            <person name="Hosoiri T."/>
            <person name="Kaku Y."/>
            <person name="Kodaira H."/>
            <person name="Kondo H."/>
            <person name="Sugawara M."/>
            <person name="Takahashi M."/>
            <person name="Kanda K."/>
            <person name="Yokoi T."/>
            <person name="Furuya T."/>
            <person name="Kikkawa E."/>
            <person name="Omura Y."/>
            <person name="Abe K."/>
            <person name="Kamihara K."/>
            <person name="Katsuta N."/>
            <person name="Sato K."/>
            <person name="Tanikawa M."/>
            <person name="Yamazaki M."/>
            <person name="Ninomiya K."/>
            <person name="Ishibashi T."/>
            <person name="Yamashita H."/>
            <person name="Murakawa K."/>
            <person name="Fujimori K."/>
            <person name="Tanai H."/>
            <person name="Kimata M."/>
            <person name="Watanabe M."/>
            <person name="Hiraoka S."/>
            <person name="Chiba Y."/>
            <person name="Ishida S."/>
            <person name="Ono Y."/>
            <person name="Takiguchi S."/>
            <person name="Watanabe S."/>
            <person name="Yosida M."/>
            <person name="Hotuta T."/>
            <person name="Kusano J."/>
            <person name="Kanehori K."/>
            <person name="Takahashi-Fujii A."/>
            <person name="Hara H."/>
            <person name="Tanase T.-O."/>
            <person name="Nomura Y."/>
            <person name="Togiya S."/>
            <person name="Komai F."/>
            <person name="Hara R."/>
            <person name="Takeuchi K."/>
            <person name="Arita M."/>
            <person name="Imose N."/>
            <person name="Musashino K."/>
            <person name="Yuuki H."/>
            <person name="Oshima A."/>
            <person name="Sasaki N."/>
            <person name="Aotsuka S."/>
            <person name="Yoshikawa Y."/>
            <person name="Matsunawa H."/>
            <person name="Ichihara T."/>
            <person name="Shiohata N."/>
            <person name="Sano S."/>
            <person name="Moriya S."/>
            <person name="Momiyama H."/>
            <person name="Satoh N."/>
            <person name="Takami S."/>
            <person name="Terashima Y."/>
            <person name="Suzuki O."/>
            <person name="Nakagawa S."/>
            <person name="Senoh A."/>
            <person name="Mizoguchi H."/>
            <person name="Goto Y."/>
            <person name="Shimizu F."/>
            <person name="Wakebe H."/>
            <person name="Hishigaki H."/>
            <person name="Watanabe T."/>
            <person name="Sugiyama A."/>
            <person name="Takemoto M."/>
            <person name="Kawakami B."/>
            <person name="Yamazaki M."/>
            <person name="Watanabe K."/>
            <person name="Kumagai A."/>
            <person name="Itakura S."/>
            <person name="Fukuzumi Y."/>
            <person name="Fujimori Y."/>
            <person name="Komiyama M."/>
            <person name="Tashiro H."/>
            <person name="Tanigami A."/>
            <person name="Fujiwara T."/>
            <person name="Ono T."/>
            <person name="Yamada K."/>
            <person name="Fujii Y."/>
            <person name="Ozaki K."/>
            <person name="Hirao M."/>
            <person name="Ohmori Y."/>
            <person name="Kawabata A."/>
            <person name="Hikiji T."/>
            <person name="Kobatake N."/>
            <person name="Inagaki H."/>
            <person name="Ikema Y."/>
            <person name="Okamoto S."/>
            <person name="Okitani R."/>
            <person name="Kawakami T."/>
            <person name="Noguchi S."/>
            <person name="Itoh T."/>
            <person name="Shigeta K."/>
            <person name="Senba T."/>
            <person name="Matsumura K."/>
            <person name="Nakajima Y."/>
            <person name="Mizuno T."/>
            <person name="Morinaga M."/>
            <person name="Sasaki M."/>
            <person name="Togashi T."/>
            <person name="Oyama M."/>
            <person name="Hata H."/>
            <person name="Watanabe M."/>
            <person name="Komatsu T."/>
            <person name="Mizushima-Sugano J."/>
            <person name="Satoh T."/>
            <person name="Shirai Y."/>
            <person name="Takahashi Y."/>
            <person name="Nakagawa K."/>
            <person name="Okumura K."/>
            <person name="Nagase T."/>
            <person name="Nomura N."/>
            <person name="Kikuchi H."/>
            <person name="Masuho Y."/>
            <person name="Yamashita R."/>
            <person name="Nakai K."/>
            <person name="Yada T."/>
            <person name="Nakamura Y."/>
            <person name="Ohara O."/>
            <person name="Isogai T."/>
            <person name="Sugano S."/>
        </authorList>
    </citation>
    <scope>PARTIAL NUCLEOTIDE SEQUENCE [LARGE SCALE MRNA] (ISOFORM 3)</scope>
</reference>
<reference key="7">
    <citation type="journal article" date="2003" name="Mol. Cell">
        <title>Ligand-dependent nuclear receptor corepressor LCoR functions by histone deacetylase-dependent and -independent mechanisms.</title>
        <authorList>
            <person name="Fernandes I."/>
            <person name="Bastien Y."/>
            <person name="Wai T."/>
            <person name="Nygard K."/>
            <person name="Lin R."/>
            <person name="Cormier O."/>
            <person name="Lee H.S."/>
            <person name="Eng F."/>
            <person name="Bertos N.R."/>
            <person name="Pelletier N."/>
            <person name="Mader S."/>
            <person name="Han V.K.M."/>
            <person name="Yang X.-J."/>
            <person name="White J.H."/>
        </authorList>
    </citation>
    <scope>FUNCTION</scope>
    <scope>INTERACTION WITH CTBP1; ESR1; ESR2; HDAC3 AND HDAC6</scope>
    <scope>SUBCELLULAR LOCATION</scope>
    <scope>MUTAGENESIS OF 56-LEU-LEU-57</scope>
    <scope>TISSUE SPECIFICITY</scope>
</reference>
<reference key="8">
    <citation type="journal article" date="2003" name="Nature">
        <title>Coordinated histone modifications mediated by a CtBP co-repressor complex.</title>
        <authorList>
            <person name="Shi Y."/>
            <person name="Sawada J."/>
            <person name="Sui G."/>
            <person name="Affar E.B."/>
            <person name="Whetstine J.R."/>
            <person name="Lan F."/>
            <person name="Ogawa H."/>
            <person name="Luke M.P.-S."/>
            <person name="Nakatani Y."/>
            <person name="Shi Y."/>
        </authorList>
    </citation>
    <scope>IDENTIFICATION IN A COREPRESSOR COMPLEX</scope>
    <scope>IDENTIFICATION BY MASS SPECTROMETRY</scope>
</reference>
<reference key="9">
    <citation type="journal article" date="2007" name="Science">
        <title>ATM and ATR substrate analysis reveals extensive protein networks responsive to DNA damage.</title>
        <authorList>
            <person name="Matsuoka S."/>
            <person name="Ballif B.A."/>
            <person name="Smogorzewska A."/>
            <person name="McDonald E.R. III"/>
            <person name="Hurov K.E."/>
            <person name="Luo J."/>
            <person name="Bakalarski C.E."/>
            <person name="Zhao Z."/>
            <person name="Solimini N."/>
            <person name="Lerenthal Y."/>
            <person name="Shiloh Y."/>
            <person name="Gygi S.P."/>
            <person name="Elledge S.J."/>
        </authorList>
    </citation>
    <scope>IDENTIFICATION BY MASS SPECTROMETRY [LARGE SCALE ANALYSIS]</scope>
    <source>
        <tissue>Embryonic kidney</tissue>
    </source>
</reference>
<reference key="10">
    <citation type="journal article" date="2008" name="Proc. Natl. Acad. Sci. U.S.A.">
        <title>A quantitative atlas of mitotic phosphorylation.</title>
        <authorList>
            <person name="Dephoure N."/>
            <person name="Zhou C."/>
            <person name="Villen J."/>
            <person name="Beausoleil S.A."/>
            <person name="Bakalarski C.E."/>
            <person name="Elledge S.J."/>
            <person name="Gygi S.P."/>
        </authorList>
    </citation>
    <scope>PHOSPHORYLATION [LARGE SCALE ANALYSIS] AT SER-583 (ISOFORM 3)</scope>
    <scope>IDENTIFICATION BY MASS SPECTROMETRY [LARGE SCALE ANALYSIS]</scope>
    <source>
        <tissue>Cervix carcinoma</tissue>
    </source>
</reference>
<reference key="11">
    <citation type="journal article" date="2009" name="Anal. Chem.">
        <title>Lys-N and trypsin cover complementary parts of the phosphoproteome in a refined SCX-based approach.</title>
        <authorList>
            <person name="Gauci S."/>
            <person name="Helbig A.O."/>
            <person name="Slijper M."/>
            <person name="Krijgsveld J."/>
            <person name="Heck A.J."/>
            <person name="Mohammed S."/>
        </authorList>
    </citation>
    <scope>IDENTIFICATION BY MASS SPECTROMETRY [LARGE SCALE ANALYSIS]</scope>
</reference>
<reference key="12">
    <citation type="journal article" date="2009" name="Sci. Signal.">
        <title>Quantitative phosphoproteomic analysis of T cell receptor signaling reveals system-wide modulation of protein-protein interactions.</title>
        <authorList>
            <person name="Mayya V."/>
            <person name="Lundgren D.H."/>
            <person name="Hwang S.-I."/>
            <person name="Rezaul K."/>
            <person name="Wu L."/>
            <person name="Eng J.K."/>
            <person name="Rodionov V."/>
            <person name="Han D.K."/>
        </authorList>
    </citation>
    <scope>PHOSPHORYLATION [LARGE SCALE ANALYSIS] AT SER-1077 (ISOFORM 3)</scope>
    <scope>IDENTIFICATION BY MASS SPECTROMETRY [LARGE SCALE ANALYSIS]</scope>
    <source>
        <tissue>Leukemic T-cell</tissue>
    </source>
</reference>
<reference key="13">
    <citation type="journal article" date="2010" name="Sci. Signal.">
        <title>Quantitative phosphoproteomics reveals widespread full phosphorylation site occupancy during mitosis.</title>
        <authorList>
            <person name="Olsen J.V."/>
            <person name="Vermeulen M."/>
            <person name="Santamaria A."/>
            <person name="Kumar C."/>
            <person name="Miller M.L."/>
            <person name="Jensen L.J."/>
            <person name="Gnad F."/>
            <person name="Cox J."/>
            <person name="Jensen T.S."/>
            <person name="Nigg E.A."/>
            <person name="Brunak S."/>
            <person name="Mann M."/>
        </authorList>
    </citation>
    <scope>PHOSPHORYLATION [LARGE SCALE ANALYSIS] AT SER-63 AND SER-249</scope>
    <scope>PHOSPHORYLATION [LARGE SCALE ANALYSIS] AT SER-792; SER-1048 AND SER-1274 (ISOFORM 3)</scope>
    <scope>IDENTIFICATION BY MASS SPECTROMETRY [LARGE SCALE ANALYSIS]</scope>
    <source>
        <tissue>Cervix carcinoma</tissue>
    </source>
</reference>
<reference key="14">
    <citation type="journal article" date="2011" name="Sci. Signal.">
        <title>System-wide temporal characterization of the proteome and phosphoproteome of human embryonic stem cell differentiation.</title>
        <authorList>
            <person name="Rigbolt K.T."/>
            <person name="Prokhorova T.A."/>
            <person name="Akimov V."/>
            <person name="Henningsen J."/>
            <person name="Johansen P.T."/>
            <person name="Kratchmarova I."/>
            <person name="Kassem M."/>
            <person name="Mann M."/>
            <person name="Olsen J.V."/>
            <person name="Blagoev B."/>
        </authorList>
    </citation>
    <scope>PHOSPHORYLATION [LARGE SCALE ANALYSIS] AT SER-583 (ISOFORM 3)</scope>
    <scope>IDENTIFICATION BY MASS SPECTROMETRY [LARGE SCALE ANALYSIS]</scope>
</reference>
<reference key="15">
    <citation type="journal article" date="2013" name="J. Proteome Res.">
        <title>Toward a comprehensive characterization of a human cancer cell phosphoproteome.</title>
        <authorList>
            <person name="Zhou H."/>
            <person name="Di Palma S."/>
            <person name="Preisinger C."/>
            <person name="Peng M."/>
            <person name="Polat A.N."/>
            <person name="Heck A.J."/>
            <person name="Mohammed S."/>
        </authorList>
    </citation>
    <scope>PHOSPHORYLATION [LARGE SCALE ANALYSIS] AT SER-42 AND SER-249</scope>
    <scope>PHOSPHORYLATION [LARGE SCALE ANALYSIS] AT SER-583 AND SER-605 (ISOFORM 3)</scope>
    <scope>IDENTIFICATION BY MASS SPECTROMETRY [LARGE SCALE ANALYSIS]</scope>
    <source>
        <tissue>Cervix carcinoma</tissue>
        <tissue>Erythroleukemia</tissue>
    </source>
</reference>
<reference key="16">
    <citation type="journal article" date="2014" name="Mol. Cell. Proteomics">
        <title>Immunoaffinity enrichment and mass spectrometry analysis of protein methylation.</title>
        <authorList>
            <person name="Guo A."/>
            <person name="Gu H."/>
            <person name="Zhou J."/>
            <person name="Mulhern D."/>
            <person name="Wang Y."/>
            <person name="Lee K.A."/>
            <person name="Yang V."/>
            <person name="Aguiar M."/>
            <person name="Kornhauser J."/>
            <person name="Jia X."/>
            <person name="Ren J."/>
            <person name="Beausoleil S.A."/>
            <person name="Silva J.C."/>
            <person name="Vemulapalli V."/>
            <person name="Bedford M.T."/>
            <person name="Comb M.J."/>
        </authorList>
    </citation>
    <scope>METHYLATION [LARGE SCALE ANALYSIS] AT LYS-1214 AND LYS-1219 (ISOFORM 3)</scope>
    <scope>IDENTIFICATION BY MASS SPECTROMETRY [LARGE SCALE ANALYSIS]</scope>
    <source>
        <tissue>Colon carcinoma</tissue>
    </source>
</reference>
<reference key="17">
    <citation type="journal article" date="2017" name="Nat. Struct. Mol. Biol.">
        <title>Site-specific mapping of the human SUMO proteome reveals co-modification with phosphorylation.</title>
        <authorList>
            <person name="Hendriks I.A."/>
            <person name="Lyon D."/>
            <person name="Young C."/>
            <person name="Jensen L.J."/>
            <person name="Vertegaal A.C."/>
            <person name="Nielsen M.L."/>
        </authorList>
    </citation>
    <scope>SUMOYLATION [LARGE SCALE ANALYSIS] AT LYS-254 AND LYS-414</scope>
    <scope>SUMOYLATION [LARGE SCALE ANALYSIS] AT LYS-345; LYS-391; LYS-543 AND LYS-976 (ISOFORM 3)</scope>
    <scope>IDENTIFICATION BY MASS SPECTROMETRY [LARGE SCALE ANALYSIS]</scope>
</reference>
<reference key="18">
    <citation type="submission" date="2005-11" db="PDB data bank">
        <title>Solution structures of the HTH domain of human LCOR protein.</title>
        <authorList>
            <consortium name="RIKEN structural genomics initiative (RSGI)"/>
        </authorList>
    </citation>
    <scope>STRUCTURE BY NMR OF 343-405</scope>
</reference>
<accession>Q96JN0</accession>
<accession>D3DR47</accession>
<accession>Q5VW16</accession>
<accession>Q7Z723</accession>
<accession>Q86T32</accession>
<accession>Q86T33</accession>
<accession>Q8N3L6</accession>
<accession>Q8N655</accession>
<accession>Q9H945</accession>
<accession>Q9Y457</accession>
<keyword id="KW-0002">3D-structure</keyword>
<keyword id="KW-0010">Activator</keyword>
<keyword id="KW-0025">Alternative splicing</keyword>
<keyword id="KW-0238">DNA-binding</keyword>
<keyword id="KW-1017">Isopeptide bond</keyword>
<keyword id="KW-0488">Methylation</keyword>
<keyword id="KW-0539">Nucleus</keyword>
<keyword id="KW-0597">Phosphoprotein</keyword>
<keyword id="KW-1267">Proteomics identification</keyword>
<keyword id="KW-1185">Reference proteome</keyword>
<keyword id="KW-0678">Repressor</keyword>
<keyword id="KW-0804">Transcription</keyword>
<keyword id="KW-0805">Transcription regulation</keyword>
<keyword id="KW-0832">Ubl conjugation</keyword>
<dbReference type="EMBL" id="AB058698">
    <property type="protein sequence ID" value="BAB47424.1"/>
    <property type="status" value="ALT_INIT"/>
    <property type="molecule type" value="mRNA"/>
</dbReference>
<dbReference type="EMBL" id="AL834245">
    <property type="protein sequence ID" value="CAD38921.2"/>
    <property type="molecule type" value="mRNA"/>
</dbReference>
<dbReference type="EMBL" id="AL832106">
    <property type="protein sequence ID" value="CAD91159.1"/>
    <property type="molecule type" value="mRNA"/>
</dbReference>
<dbReference type="EMBL" id="AL832044">
    <property type="protein sequence ID" value="CAD91160.1"/>
    <property type="molecule type" value="mRNA"/>
</dbReference>
<dbReference type="EMBL" id="AL049938">
    <property type="protein sequence ID" value="CAB43214.1"/>
    <property type="molecule type" value="mRNA"/>
</dbReference>
<dbReference type="EMBL" id="AL442123">
    <property type="status" value="NOT_ANNOTATED_CDS"/>
    <property type="molecule type" value="Genomic_DNA"/>
</dbReference>
<dbReference type="EMBL" id="CH471066">
    <property type="protein sequence ID" value="EAW49963.1"/>
    <property type="molecule type" value="Genomic_DNA"/>
</dbReference>
<dbReference type="EMBL" id="CH471066">
    <property type="protein sequence ID" value="EAW49965.1"/>
    <property type="molecule type" value="Genomic_DNA"/>
</dbReference>
<dbReference type="EMBL" id="CH471066">
    <property type="protein sequence ID" value="EAW49966.1"/>
    <property type="molecule type" value="Genomic_DNA"/>
</dbReference>
<dbReference type="EMBL" id="BC024315">
    <property type="protein sequence ID" value="AAH24315.1"/>
    <property type="status" value="ALT_INIT"/>
    <property type="molecule type" value="mRNA"/>
</dbReference>
<dbReference type="EMBL" id="BC053359">
    <property type="protein sequence ID" value="AAH53359.1"/>
    <property type="molecule type" value="mRNA"/>
</dbReference>
<dbReference type="EMBL" id="AK023084">
    <property type="protein sequence ID" value="BAB14396.1"/>
    <property type="status" value="ALT_INIT"/>
    <property type="molecule type" value="mRNA"/>
</dbReference>
<dbReference type="CCDS" id="CCDS53561.1">
    <molecule id="Q96JN0-2"/>
</dbReference>
<dbReference type="CCDS" id="CCDS7451.1">
    <molecule id="Q96JN0-1"/>
</dbReference>
<dbReference type="CCDS" id="CCDS86132.1">
    <molecule id="Q96JN0-3"/>
</dbReference>
<dbReference type="PIR" id="T08672">
    <property type="entry name" value="T08672"/>
</dbReference>
<dbReference type="RefSeq" id="NP_001164236.1">
    <molecule id="Q96JN0-1"/>
    <property type="nucleotide sequence ID" value="NM_001170765.2"/>
</dbReference>
<dbReference type="RefSeq" id="NP_001164237.1">
    <molecule id="Q96JN0-2"/>
    <property type="nucleotide sequence ID" value="NM_001170766.2"/>
</dbReference>
<dbReference type="RefSeq" id="NP_001333445.1">
    <molecule id="Q96JN0-3"/>
    <property type="nucleotide sequence ID" value="NM_001346516.2"/>
</dbReference>
<dbReference type="RefSeq" id="NP_115816.2">
    <molecule id="Q96JN0-1"/>
    <property type="nucleotide sequence ID" value="NM_032440.4"/>
</dbReference>
<dbReference type="RefSeq" id="XP_016872275.1">
    <property type="nucleotide sequence ID" value="XM_017016786.1"/>
</dbReference>
<dbReference type="RefSeq" id="XP_016872276.1">
    <property type="nucleotide sequence ID" value="XM_017016787.1"/>
</dbReference>
<dbReference type="RefSeq" id="XP_016872277.1">
    <property type="nucleotide sequence ID" value="XM_017016788.1"/>
</dbReference>
<dbReference type="PDB" id="2COB">
    <property type="method" value="NMR"/>
    <property type="chains" value="A=343-405"/>
</dbReference>
<dbReference type="PDB" id="6V3X">
    <property type="method" value="X-ray"/>
    <property type="resolution" value="1.70 A"/>
    <property type="chains" value="B=98-103"/>
</dbReference>
<dbReference type="PDB" id="6V3Y">
    <property type="method" value="X-ray"/>
    <property type="resolution" value="1.63 A"/>
    <property type="chains" value="B=5-9"/>
</dbReference>
<dbReference type="PDBsum" id="2COB"/>
<dbReference type="PDBsum" id="6V3X"/>
<dbReference type="PDBsum" id="6V3Y"/>
<dbReference type="SMR" id="Q96JN0"/>
<dbReference type="BioGRID" id="117579">
    <property type="interactions" value="57"/>
</dbReference>
<dbReference type="BioGRID" id="124093">
    <property type="interactions" value="223"/>
</dbReference>
<dbReference type="ComplexPortal" id="CPX-2196">
    <property type="entry name" value="Polycomb repressive complex 2.1, EZH1-RBBP4-PCL3-PALI1 variant"/>
</dbReference>
<dbReference type="ComplexPortal" id="CPX-2198">
    <property type="entry name" value="Polycomb repressive complex 2.1,EZH2-RBBP4-PCL3-PALI1 variant"/>
</dbReference>
<dbReference type="ComplexPortal" id="CPX-2204">
    <property type="entry name" value="Polycomb repressive complex 2.1, EZH2-RBBP4-PCL1-PALI1 variant"/>
</dbReference>
<dbReference type="ComplexPortal" id="CPX-2307">
    <property type="entry name" value="Polycomb repressive complex 2.1, EZH1-RBBP7-PCL1-PALI1 variant"/>
</dbReference>
<dbReference type="ComplexPortal" id="CPX-2309">
    <property type="entry name" value="Polycomb repressive complex 2.1, EZH1-RBBP7-PCL2-PALI1 variant"/>
</dbReference>
<dbReference type="ComplexPortal" id="CPX-2310">
    <property type="entry name" value="Polycomb repressive complex 2.1, EZH1-RBBP4-PCL2-PALI1 variant"/>
</dbReference>
<dbReference type="ComplexPortal" id="CPX-2311">
    <property type="entry name" value="Polycomb repressive complex 2.1, EZH2-RBBP7-PCL1-PALI1 variant"/>
</dbReference>
<dbReference type="ComplexPortal" id="CPX-2312">
    <property type="entry name" value="Polycomb repressive complex 2.1, EZH2-RBBP4-PCL2-PALI1 variant"/>
</dbReference>
<dbReference type="ComplexPortal" id="CPX-2314">
    <property type="entry name" value="Polycomb repressive complex 2.1,EZH2-RBBP7-PCL2-PALI1 variant"/>
</dbReference>
<dbReference type="ComplexPortal" id="CPX-2316">
    <property type="entry name" value="Polycomb repressive complex 2.1,EZH2-RBBP7-PCL3-PALI1 variant"/>
</dbReference>
<dbReference type="ComplexPortal" id="CPX-2569">
    <property type="entry name" value="Polycomb repressive complex 2.1, EZH1-RBBP4-PCL1-PALI1 variant"/>
</dbReference>
<dbReference type="ComplexPortal" id="CPX-2570">
    <property type="entry name" value="Polycomb repressive complex 2.1, EZH1-RBBP7-PCL3-PALI1 variant"/>
</dbReference>
<dbReference type="CORUM" id="Q96JN0"/>
<dbReference type="ELM" id="Q96JN0"/>
<dbReference type="FunCoup" id="Q96JN0">
    <property type="interactions" value="1992"/>
</dbReference>
<dbReference type="IntAct" id="Q96JN0">
    <property type="interactions" value="221"/>
</dbReference>
<dbReference type="MINT" id="Q96JN0"/>
<dbReference type="STRING" id="9606.ENSP00000490116"/>
<dbReference type="GlyGen" id="Q96JN0">
    <property type="glycosylation" value="2 sites, 1 O-linked glycan (2 sites)"/>
</dbReference>
<dbReference type="iPTMnet" id="Q96JN0"/>
<dbReference type="PhosphoSitePlus" id="Q96JN0"/>
<dbReference type="SwissPalm" id="Q96JN0"/>
<dbReference type="BioMuta" id="LCOR"/>
<dbReference type="DMDM" id="68565212"/>
<dbReference type="jPOST" id="Q96JN0"/>
<dbReference type="MassIVE" id="Q96JN0"/>
<dbReference type="PaxDb" id="9606-ENSP00000360138"/>
<dbReference type="PeptideAtlas" id="Q96JN0"/>
<dbReference type="ProteomicsDB" id="72131"/>
<dbReference type="ProteomicsDB" id="76989">
    <molecule id="Q96JN0-1"/>
</dbReference>
<dbReference type="ProteomicsDB" id="76990">
    <molecule id="Q96JN0-2"/>
</dbReference>
<dbReference type="Antibodypedia" id="30781">
    <property type="antibodies" value="227 antibodies from 25 providers"/>
</dbReference>
<dbReference type="DNASU" id="26148"/>
<dbReference type="DNASU" id="84458"/>
<dbReference type="Ensembl" id="ENST00000356016.7">
    <molecule id="Q96JN0-1"/>
    <property type="protein sequence ID" value="ENSP00000348298.2"/>
    <property type="gene ID" value="ENSG00000196233.14"/>
</dbReference>
<dbReference type="Ensembl" id="ENST00000371097.8">
    <molecule id="Q96JN0-1"/>
    <property type="protein sequence ID" value="ENSP00000360138.3"/>
    <property type="gene ID" value="ENSG00000196233.14"/>
</dbReference>
<dbReference type="Ensembl" id="ENST00000371103.8">
    <molecule id="Q96JN0-1"/>
    <property type="protein sequence ID" value="ENSP00000360144.3"/>
    <property type="gene ID" value="ENSG00000196233.14"/>
</dbReference>
<dbReference type="Ensembl" id="ENST00000421806.4">
    <molecule id="Q96JN0-3"/>
    <property type="protein sequence ID" value="ENSP00000490116.2"/>
    <property type="gene ID" value="ENSG00000196233.14"/>
</dbReference>
<dbReference type="Ensembl" id="ENST00000540664.6">
    <molecule id="Q96JN0-2"/>
    <property type="protein sequence ID" value="ENSP00000443431.1"/>
    <property type="gene ID" value="ENSG00000196233.14"/>
</dbReference>
<dbReference type="Ensembl" id="ENST00000675471.1">
    <molecule id="Q96JN0-1"/>
    <property type="protein sequence ID" value="ENSP00000502633.1"/>
    <property type="gene ID" value="ENSG00000196233.14"/>
</dbReference>
<dbReference type="Ensembl" id="ENST00000675537.1">
    <molecule id="Q96JN0-1"/>
    <property type="protein sequence ID" value="ENSP00000501560.1"/>
    <property type="gene ID" value="ENSG00000196233.14"/>
</dbReference>
<dbReference type="Ensembl" id="ENST00000675971.1">
    <molecule id="Q96JN0-1"/>
    <property type="protein sequence ID" value="ENSP00000501639.1"/>
    <property type="gene ID" value="ENSG00000196233.14"/>
</dbReference>
<dbReference type="GeneID" id="84458"/>
<dbReference type="KEGG" id="hsa:84458"/>
<dbReference type="MANE-Select" id="ENST00000421806.4">
    <molecule id="Q96JN0-3"/>
    <property type="protein sequence ID" value="ENSP00000490116.2"/>
    <property type="RefSeq nucleotide sequence ID" value="NM_001346516.2"/>
    <property type="RefSeq protein sequence ID" value="NP_001333445.1"/>
</dbReference>
<dbReference type="UCSC" id="uc001kmr.4">
    <molecule id="Q96JN0-1"/>
    <property type="organism name" value="human"/>
</dbReference>
<dbReference type="AGR" id="HGNC:29503"/>
<dbReference type="CTD" id="84458"/>
<dbReference type="DisGeNET" id="84458"/>
<dbReference type="GeneCards" id="LCOR"/>
<dbReference type="HGNC" id="HGNC:29503">
    <property type="gene designation" value="LCOR"/>
</dbReference>
<dbReference type="HPA" id="ENSG00000196233">
    <property type="expression patterns" value="Tissue enhanced (bone)"/>
</dbReference>
<dbReference type="MIM" id="607698">
    <property type="type" value="gene"/>
</dbReference>
<dbReference type="neXtProt" id="NX_Q96JN0"/>
<dbReference type="OpenTargets" id="ENSG00000196233"/>
<dbReference type="PharmGKB" id="PA145148487"/>
<dbReference type="VEuPathDB" id="HostDB:ENSG00000196233"/>
<dbReference type="eggNOG" id="KOG4565">
    <property type="taxonomic scope" value="Eukaryota"/>
</dbReference>
<dbReference type="GeneTree" id="ENSGT00940000154965"/>
<dbReference type="HOGENOM" id="CLU_040042_0_0_1"/>
<dbReference type="InParanoid" id="Q96JN0"/>
<dbReference type="OMA" id="AKNNWKM"/>
<dbReference type="OrthoDB" id="9941983at2759"/>
<dbReference type="PAN-GO" id="Q96JN0">
    <property type="GO annotations" value="2 GO annotations based on evolutionary models"/>
</dbReference>
<dbReference type="PhylomeDB" id="Q96JN0"/>
<dbReference type="TreeFam" id="TF319589"/>
<dbReference type="TreeFam" id="TF332137"/>
<dbReference type="PathwayCommons" id="Q96JN0"/>
<dbReference type="SignaLink" id="Q96JN0"/>
<dbReference type="BioGRID-ORCS" id="84458">
    <property type="hits" value="28 hits in 1186 CRISPR screens"/>
</dbReference>
<dbReference type="EvolutionaryTrace" id="Q96JN0"/>
<dbReference type="GeneWiki" id="LCOR"/>
<dbReference type="GenomeRNAi" id="84458"/>
<dbReference type="Pharos" id="Q96JN0">
    <property type="development level" value="Tbio"/>
</dbReference>
<dbReference type="PRO" id="PR:Q96JN0"/>
<dbReference type="Proteomes" id="UP000005640">
    <property type="component" value="Chromosome 10"/>
</dbReference>
<dbReference type="RNAct" id="Q96JN0">
    <property type="molecule type" value="protein"/>
</dbReference>
<dbReference type="Bgee" id="ENSG00000196233">
    <property type="expression patterns" value="Expressed in secondary oocyte and 191 other cell types or tissues"/>
</dbReference>
<dbReference type="ExpressionAtlas" id="Q96JN0">
    <property type="expression patterns" value="baseline and differential"/>
</dbReference>
<dbReference type="GO" id="GO:0005654">
    <property type="term" value="C:nucleoplasm"/>
    <property type="evidence" value="ECO:0000314"/>
    <property type="project" value="HPA"/>
</dbReference>
<dbReference type="GO" id="GO:0005634">
    <property type="term" value="C:nucleus"/>
    <property type="evidence" value="ECO:0000318"/>
    <property type="project" value="GO_Central"/>
</dbReference>
<dbReference type="GO" id="GO:0003677">
    <property type="term" value="F:DNA binding"/>
    <property type="evidence" value="ECO:0007669"/>
    <property type="project" value="UniProtKB-KW"/>
</dbReference>
<dbReference type="GO" id="GO:0042826">
    <property type="term" value="F:histone deacetylase binding"/>
    <property type="evidence" value="ECO:0000353"/>
    <property type="project" value="ARUK-UCL"/>
</dbReference>
<dbReference type="GO" id="GO:1990226">
    <property type="term" value="F:histone methyltransferase binding"/>
    <property type="evidence" value="ECO:0000353"/>
    <property type="project" value="ARUK-UCL"/>
</dbReference>
<dbReference type="GO" id="GO:0030331">
    <property type="term" value="F:nuclear estrogen receptor binding"/>
    <property type="evidence" value="ECO:0000353"/>
    <property type="project" value="ARUK-UCL"/>
</dbReference>
<dbReference type="GO" id="GO:0003714">
    <property type="term" value="F:transcription corepressor activity"/>
    <property type="evidence" value="ECO:0000314"/>
    <property type="project" value="ARUK-UCL"/>
</dbReference>
<dbReference type="GO" id="GO:0001222">
    <property type="term" value="F:transcription corepressor binding"/>
    <property type="evidence" value="ECO:0000353"/>
    <property type="project" value="ARUK-UCL"/>
</dbReference>
<dbReference type="GO" id="GO:1990381">
    <property type="term" value="F:ubiquitin-specific protease binding"/>
    <property type="evidence" value="ECO:0000353"/>
    <property type="project" value="ARUK-UCL"/>
</dbReference>
<dbReference type="GO" id="GO:0071392">
    <property type="term" value="P:cellular response to estradiol stimulus"/>
    <property type="evidence" value="ECO:0000314"/>
    <property type="project" value="ARUK-UCL"/>
</dbReference>
<dbReference type="GO" id="GO:0000122">
    <property type="term" value="P:negative regulation of transcription by RNA polymerase II"/>
    <property type="evidence" value="ECO:0000314"/>
    <property type="project" value="ARUK-UCL"/>
</dbReference>
<dbReference type="GO" id="GO:0006357">
    <property type="term" value="P:regulation of transcription by RNA polymerase II"/>
    <property type="evidence" value="ECO:0000318"/>
    <property type="project" value="GO_Central"/>
</dbReference>
<dbReference type="FunFam" id="1.10.10.60:FF:000019">
    <property type="entry name" value="Ligand-dependent corepressor isoform 1"/>
    <property type="match status" value="1"/>
</dbReference>
<dbReference type="Gene3D" id="1.10.10.60">
    <property type="entry name" value="Homeodomain-like"/>
    <property type="match status" value="1"/>
</dbReference>
<dbReference type="InterPro" id="IPR009057">
    <property type="entry name" value="Homeodomain-like_sf"/>
</dbReference>
<dbReference type="InterPro" id="IPR007889">
    <property type="entry name" value="HTH_Psq"/>
</dbReference>
<dbReference type="PANTHER" id="PTHR14931">
    <property type="entry name" value="GENE 340-RELATED"/>
    <property type="match status" value="1"/>
</dbReference>
<dbReference type="PANTHER" id="PTHR14931:SF2">
    <property type="entry name" value="LIGAND DEPENDENT NUCLEAR RECEPTOR COREPRESSOR"/>
    <property type="match status" value="1"/>
</dbReference>
<dbReference type="Pfam" id="PF05225">
    <property type="entry name" value="HTH_psq"/>
    <property type="match status" value="1"/>
</dbReference>
<dbReference type="SUPFAM" id="SSF46689">
    <property type="entry name" value="Homeodomain-like"/>
    <property type="match status" value="1"/>
</dbReference>
<dbReference type="PROSITE" id="PS50960">
    <property type="entry name" value="HTH_PSQ"/>
    <property type="match status" value="1"/>
</dbReference>
<comment type="function">
    <text evidence="1 5">May act as transcription activator that binds DNA elements with the sequence 5'-CCCTATCGATCGATCTCTACCT-3' (By similarity). Repressor of ligand-dependent transcription activation by target nuclear receptors. Repressor of ligand-dependent transcription activation by ESR1, ESR2, NR3C1, PGR, RARA, RARB, RARG, RXRA and VDR.</text>
</comment>
<comment type="subunit">
    <text evidence="5 6">Interacts with ESR1 and ESR2 in the presence of estradiol. Interacts with CTBP1, HDAC3 and HDAC6. Component of a large corepressor complex that contains about 20 proteins, including CTBP1, CTBP2, HDAC1 and HDAC2.</text>
</comment>
<comment type="interaction">
    <interactant intactId="EBI-746045">
        <id>Q96JN0</id>
    </interactant>
    <interactant intactId="EBI-908846">
        <id>Q13363</id>
        <label>CTBP1</label>
    </interactant>
    <organismsDiffer>false</organismsDiffer>
    <experiments>11</experiments>
</comment>
<comment type="interaction">
    <interactant intactId="EBI-746045">
        <id>Q96JN0</id>
    </interactant>
    <interactant intactId="EBI-741533">
        <id>P56545</id>
        <label>CTBP2</label>
    </interactant>
    <organismsDiffer>false</organismsDiffer>
    <experiments>8</experiments>
</comment>
<comment type="interaction">
    <interactant intactId="EBI-746045">
        <id>Q96JN0</id>
    </interactant>
    <interactant intactId="EBI-10171902">
        <id>P56545-3</id>
        <label>CTBP2</label>
    </interactant>
    <organismsDiffer>false</organismsDiffer>
    <experiments>3</experiments>
</comment>
<comment type="interaction">
    <interactant intactId="EBI-746045">
        <id>Q96JN0</id>
    </interactant>
    <interactant intactId="EBI-10174566">
        <id>A2ABF9</id>
        <label>EHMT2</label>
    </interactant>
    <organismsDiffer>false</organismsDiffer>
    <experiments>3</experiments>
</comment>
<comment type="interaction">
    <interactant intactId="EBI-746045">
        <id>Q96JN0</id>
    </interactant>
    <interactant intactId="EBI-618309">
        <id>Q08379</id>
        <label>GOLGA2</label>
    </interactant>
    <organismsDiffer>false</organismsDiffer>
    <experiments>3</experiments>
</comment>
<comment type="interaction">
    <interactant intactId="EBI-746045">
        <id>Q96JN0</id>
    </interactant>
    <interactant intactId="EBI-359224">
        <id>Q13077</id>
        <label>TRAF1</label>
    </interactant>
    <organismsDiffer>false</organismsDiffer>
    <experiments>3</experiments>
</comment>
<comment type="interaction">
    <interactant intactId="EBI-10961483">
        <id>Q96JN0-2</id>
    </interactant>
    <interactant intactId="EBI-517623">
        <id>Q96CA5</id>
        <label>BIRC7</label>
    </interactant>
    <organismsDiffer>false</organismsDiffer>
    <experiments>3</experiments>
</comment>
<comment type="interaction">
    <interactant intactId="EBI-10961483">
        <id>Q96JN0-2</id>
    </interactant>
    <interactant intactId="EBI-739624">
        <id>Q8NHQ1</id>
        <label>CEP70</label>
    </interactant>
    <organismsDiffer>false</organismsDiffer>
    <experiments>3</experiments>
</comment>
<comment type="interaction">
    <interactant intactId="EBI-10961483">
        <id>Q96JN0-2</id>
    </interactant>
    <interactant intactId="EBI-18560266">
        <id>Q92753-1</id>
        <label>RORB</label>
    </interactant>
    <organismsDiffer>false</organismsDiffer>
    <experiments>3</experiments>
</comment>
<comment type="interaction">
    <interactant intactId="EBI-10961483">
        <id>Q96JN0-2</id>
    </interactant>
    <interactant intactId="EBI-359224">
        <id>Q13077</id>
        <label>TRAF1</label>
    </interactant>
    <organismsDiffer>false</organismsDiffer>
    <experiments>3</experiments>
</comment>
<comment type="subcellular location">
    <subcellularLocation>
        <location evidence="3 5">Nucleus</location>
    </subcellularLocation>
</comment>
<comment type="alternative products">
    <event type="alternative splicing"/>
    <isoform>
        <id>Q96JN0-1</id>
        <name>1</name>
        <sequence type="displayed"/>
    </isoform>
    <isoform>
        <id>Q96JN0-2</id>
        <name>2</name>
        <sequence type="described" ref="VSP_018585 VSP_018586"/>
    </isoform>
    <isoform>
        <id>Q96JN0-3</id>
        <name>3</name>
        <sequence type="described" ref="VSP_058760"/>
    </isoform>
</comment>
<comment type="tissue specificity">
    <text evidence="5">Ubiquitous.</text>
</comment>
<comment type="sequence caution" evidence="8">
    <conflict type="erroneous initiation">
        <sequence resource="EMBL-CDS" id="AAH24315"/>
    </conflict>
    <text>Truncated N-terminus.</text>
</comment>
<comment type="sequence caution" evidence="8">
    <conflict type="erroneous initiation">
        <sequence resource="EMBL-CDS" id="BAB14396"/>
    </conflict>
    <text>Truncated N-terminus.</text>
</comment>
<comment type="sequence caution" evidence="8">
    <conflict type="erroneous initiation">
        <sequence resource="EMBL-CDS" id="BAB47424"/>
    </conflict>
    <text>Extended N-terminus.</text>
</comment>